<protein>
    <recommendedName>
        <fullName evidence="3">Selenoprotein S</fullName>
        <shortName evidence="3">SelS</shortName>
    </recommendedName>
    <alternativeName>
        <fullName evidence="7">Sg2</fullName>
    </alternativeName>
</protein>
<evidence type="ECO:0000250" key="1"/>
<evidence type="ECO:0000250" key="2">
    <source>
        <dbReference type="UniProtKB" id="Q9BCZ4"/>
    </source>
</evidence>
<evidence type="ECO:0000250" key="3">
    <source>
        <dbReference type="UniProtKB" id="Q9BQE4"/>
    </source>
</evidence>
<evidence type="ECO:0000255" key="4"/>
<evidence type="ECO:0000256" key="5">
    <source>
        <dbReference type="SAM" id="MobiDB-lite"/>
    </source>
</evidence>
<evidence type="ECO:0000305" key="6"/>
<evidence type="ECO:0000312" key="7">
    <source>
        <dbReference type="EMBL" id="AAL59556.1"/>
    </source>
</evidence>
<evidence type="ECO:0000312" key="8">
    <source>
        <dbReference type="RGD" id="628897"/>
    </source>
</evidence>
<keyword id="KW-0963">Cytoplasm</keyword>
<keyword id="KW-0256">Endoplasmic reticulum</keyword>
<keyword id="KW-0472">Membrane</keyword>
<keyword id="KW-1185">Reference proteome</keyword>
<keyword id="KW-0712">Selenocysteine</keyword>
<keyword id="KW-0812">Transmembrane</keyword>
<keyword id="KW-1133">Transmembrane helix</keyword>
<keyword id="KW-0832">Ubl conjugation</keyword>
<reference key="1">
    <citation type="submission" date="2001-04" db="EMBL/GenBank/DDBJ databases">
        <title>Screening genes associated with spermatogenesis.</title>
        <authorList>
            <person name="Lou L."/>
            <person name="Zhang Y."/>
            <person name="Jia M."/>
        </authorList>
    </citation>
    <scope>NUCLEOTIDE SEQUENCE [MRNA]</scope>
    <source>
        <tissue>Testis</tissue>
    </source>
</reference>
<reference key="2">
    <citation type="journal article" date="2004" name="Genome Res.">
        <title>The status, quality, and expansion of the NIH full-length cDNA project: the Mammalian Gene Collection (MGC).</title>
        <authorList>
            <consortium name="The MGC Project Team"/>
        </authorList>
    </citation>
    <scope>NUCLEOTIDE SEQUENCE [LARGE SCALE MRNA]</scope>
    <source>
        <tissue>Pituitary</tissue>
    </source>
</reference>
<name>SELS_RAT</name>
<dbReference type="EMBL" id="AF367467">
    <property type="protein sequence ID" value="AAL59556.1"/>
    <property type="status" value="ALT_SEQ"/>
    <property type="molecule type" value="mRNA"/>
</dbReference>
<dbReference type="EMBL" id="BC059111">
    <property type="protein sequence ID" value="AAH59111.1"/>
    <property type="status" value="ALT_SEQ"/>
    <property type="molecule type" value="mRNA"/>
</dbReference>
<dbReference type="RefSeq" id="NP_775143.2">
    <property type="nucleotide sequence ID" value="NM_173120.2"/>
</dbReference>
<dbReference type="FunCoup" id="Q8VHV8">
    <property type="interactions" value="490"/>
</dbReference>
<dbReference type="STRING" id="10116.ENSRNOP00000074863"/>
<dbReference type="PhosphoSitePlus" id="Q8VHV8"/>
<dbReference type="PaxDb" id="10116-ENSRNOP00000016916"/>
<dbReference type="GeneID" id="286900"/>
<dbReference type="KEGG" id="rno:286900"/>
<dbReference type="UCSC" id="RGD:628897">
    <property type="organism name" value="rat"/>
</dbReference>
<dbReference type="AGR" id="RGD:628897"/>
<dbReference type="CTD" id="55829"/>
<dbReference type="RGD" id="628897">
    <property type="gene designation" value="Selenos"/>
</dbReference>
<dbReference type="eggNOG" id="ENOG502RXYU">
    <property type="taxonomic scope" value="Eukaryota"/>
</dbReference>
<dbReference type="InParanoid" id="Q8VHV8"/>
<dbReference type="OrthoDB" id="83882at9989"/>
<dbReference type="PhylomeDB" id="Q8VHV8"/>
<dbReference type="TreeFam" id="TF329454"/>
<dbReference type="PRO" id="PR:Q8VHV8"/>
<dbReference type="Proteomes" id="UP000002494">
    <property type="component" value="Unplaced"/>
</dbReference>
<dbReference type="GO" id="GO:0005881">
    <property type="term" value="C:cytoplasmic microtubule"/>
    <property type="evidence" value="ECO:0000250"/>
    <property type="project" value="UniProtKB"/>
</dbReference>
<dbReference type="GO" id="GO:0036513">
    <property type="term" value="C:Derlin-1 retrotranslocation complex"/>
    <property type="evidence" value="ECO:0000266"/>
    <property type="project" value="RGD"/>
</dbReference>
<dbReference type="GO" id="GO:0036502">
    <property type="term" value="C:Derlin-1-VIMP complex"/>
    <property type="evidence" value="ECO:0000266"/>
    <property type="project" value="RGD"/>
</dbReference>
<dbReference type="GO" id="GO:0005789">
    <property type="term" value="C:endoplasmic reticulum membrane"/>
    <property type="evidence" value="ECO:0000266"/>
    <property type="project" value="RGD"/>
</dbReference>
<dbReference type="GO" id="GO:0034362">
    <property type="term" value="C:low-density lipoprotein particle"/>
    <property type="evidence" value="ECO:0000266"/>
    <property type="project" value="RGD"/>
</dbReference>
<dbReference type="GO" id="GO:0034361">
    <property type="term" value="C:very-low-density lipoprotein particle"/>
    <property type="evidence" value="ECO:0000266"/>
    <property type="project" value="RGD"/>
</dbReference>
<dbReference type="GO" id="GO:0016209">
    <property type="term" value="F:antioxidant activity"/>
    <property type="evidence" value="ECO:0000266"/>
    <property type="project" value="RGD"/>
</dbReference>
<dbReference type="GO" id="GO:0051117">
    <property type="term" value="F:ATPase binding"/>
    <property type="evidence" value="ECO:0000266"/>
    <property type="project" value="RGD"/>
</dbReference>
<dbReference type="GO" id="GO:0019899">
    <property type="term" value="F:enzyme binding"/>
    <property type="evidence" value="ECO:0000266"/>
    <property type="project" value="RGD"/>
</dbReference>
<dbReference type="GO" id="GO:1990381">
    <property type="term" value="F:ubiquitin-specific protease binding"/>
    <property type="evidence" value="ECO:0000266"/>
    <property type="project" value="RGD"/>
</dbReference>
<dbReference type="GO" id="GO:0045454">
    <property type="term" value="P:cell redox homeostasis"/>
    <property type="evidence" value="ECO:0000266"/>
    <property type="project" value="RGD"/>
</dbReference>
<dbReference type="GO" id="GO:0071222">
    <property type="term" value="P:cellular response to lipopolysaccharide"/>
    <property type="evidence" value="ECO:0000266"/>
    <property type="project" value="RGD"/>
</dbReference>
<dbReference type="GO" id="GO:0034599">
    <property type="term" value="P:cellular response to oxidative stress"/>
    <property type="evidence" value="ECO:0000266"/>
    <property type="project" value="RGD"/>
</dbReference>
<dbReference type="GO" id="GO:0030968">
    <property type="term" value="P:endoplasmic reticulum unfolded protein response"/>
    <property type="evidence" value="ECO:0000266"/>
    <property type="project" value="RGD"/>
</dbReference>
<dbReference type="GO" id="GO:0006983">
    <property type="term" value="P:ER overload response"/>
    <property type="evidence" value="ECO:0000266"/>
    <property type="project" value="RGD"/>
</dbReference>
<dbReference type="GO" id="GO:0036503">
    <property type="term" value="P:ERAD pathway"/>
    <property type="evidence" value="ECO:0000266"/>
    <property type="project" value="RGD"/>
</dbReference>
<dbReference type="GO" id="GO:0002865">
    <property type="term" value="P:negative regulation of acute inflammatory response to antigenic stimulus"/>
    <property type="evidence" value="ECO:0000266"/>
    <property type="project" value="RGD"/>
</dbReference>
<dbReference type="GO" id="GO:1902236">
    <property type="term" value="P:negative regulation of endoplasmic reticulum stress-induced intrinsic apoptotic signaling pathway"/>
    <property type="evidence" value="ECO:0000266"/>
    <property type="project" value="RGD"/>
</dbReference>
<dbReference type="GO" id="GO:0032715">
    <property type="term" value="P:negative regulation of interleukin-6 production"/>
    <property type="evidence" value="ECO:0000266"/>
    <property type="project" value="RGD"/>
</dbReference>
<dbReference type="GO" id="GO:2000110">
    <property type="term" value="P:negative regulation of macrophage apoptotic process"/>
    <property type="evidence" value="ECO:0000266"/>
    <property type="project" value="RGD"/>
</dbReference>
<dbReference type="GO" id="GO:0032720">
    <property type="term" value="P:negative regulation of tumor necrosis factor production"/>
    <property type="evidence" value="ECO:0000266"/>
    <property type="project" value="RGD"/>
</dbReference>
<dbReference type="GO" id="GO:0080164">
    <property type="term" value="P:regulation of nitric oxide metabolic process"/>
    <property type="evidence" value="ECO:0000266"/>
    <property type="project" value="RGD"/>
</dbReference>
<dbReference type="GO" id="GO:0009749">
    <property type="term" value="P:response to glucose"/>
    <property type="evidence" value="ECO:0000266"/>
    <property type="project" value="RGD"/>
</dbReference>
<dbReference type="GO" id="GO:0051775">
    <property type="term" value="P:response to redox state"/>
    <property type="evidence" value="ECO:0000266"/>
    <property type="project" value="RGD"/>
</dbReference>
<dbReference type="GO" id="GO:0030970">
    <property type="term" value="P:retrograde protein transport, ER to cytosol"/>
    <property type="evidence" value="ECO:0000266"/>
    <property type="project" value="RGD"/>
</dbReference>
<dbReference type="Gene3D" id="6.10.250.2950">
    <property type="match status" value="1"/>
</dbReference>
<dbReference type="InterPro" id="IPR009703">
    <property type="entry name" value="Selenoprotein_S"/>
</dbReference>
<dbReference type="PANTHER" id="PTHR28621">
    <property type="entry name" value="SELENOPROTEIN S"/>
    <property type="match status" value="1"/>
</dbReference>
<dbReference type="PANTHER" id="PTHR28621:SF1">
    <property type="entry name" value="SELENOPROTEIN S"/>
    <property type="match status" value="1"/>
</dbReference>
<dbReference type="Pfam" id="PF06936">
    <property type="entry name" value="Selenoprotein_S"/>
    <property type="match status" value="1"/>
</dbReference>
<feature type="chain" id="PRO_0000097674" description="Selenoprotein S">
    <location>
        <begin position="1"/>
        <end position="190"/>
    </location>
</feature>
<feature type="transmembrane region" description="Helical" evidence="4">
    <location>
        <begin position="28"/>
        <end position="48"/>
    </location>
</feature>
<feature type="region of interest" description="VCP/p97-interacting motif (VIM)" evidence="3">
    <location>
        <begin position="78"/>
        <end position="90"/>
    </location>
</feature>
<feature type="region of interest" description="Disordered" evidence="5">
    <location>
        <begin position="96"/>
        <end position="190"/>
    </location>
</feature>
<feature type="compositionally biased region" description="Basic and acidic residues" evidence="5">
    <location>
        <begin position="97"/>
        <end position="118"/>
    </location>
</feature>
<feature type="compositionally biased region" description="Gly residues" evidence="5">
    <location>
        <begin position="160"/>
        <end position="174"/>
    </location>
</feature>
<feature type="non-standard amino acid" description="Selenocysteine" evidence="1">
    <location>
        <position position="189"/>
    </location>
</feature>
<feature type="sequence conflict" description="In Ref. 2; AAH59111." evidence="6" ref="2">
    <original>M</original>
    <variation>L</variation>
    <location>
        <position position="8"/>
    </location>
</feature>
<feature type="sequence conflict" description="In Ref. 2; AAH59111." evidence="6" ref="2">
    <original>Q</original>
    <variation>L</variation>
    <location>
        <position position="104"/>
    </location>
</feature>
<organism>
    <name type="scientific">Rattus norvegicus</name>
    <name type="common">Rat</name>
    <dbReference type="NCBI Taxonomy" id="10116"/>
    <lineage>
        <taxon>Eukaryota</taxon>
        <taxon>Metazoa</taxon>
        <taxon>Chordata</taxon>
        <taxon>Craniata</taxon>
        <taxon>Vertebrata</taxon>
        <taxon>Euteleostomi</taxon>
        <taxon>Mammalia</taxon>
        <taxon>Eutheria</taxon>
        <taxon>Euarchontoglires</taxon>
        <taxon>Glires</taxon>
        <taxon>Rodentia</taxon>
        <taxon>Myomorpha</taxon>
        <taxon>Muroidea</taxon>
        <taxon>Muridae</taxon>
        <taxon>Murinae</taxon>
        <taxon>Rattus</taxon>
    </lineage>
</organism>
<proteinExistence type="evidence at transcript level"/>
<gene>
    <name evidence="8" type="primary">Selenos</name>
    <name evidence="8" type="synonym">Vimp</name>
</gene>
<accession>Q8VHV8</accession>
<accession>Q6PCV8</accession>
<comment type="function">
    <text evidence="1">Involved in the degradation process of misfolded endoplasmic reticulum (ER) luminal proteins. Participates in the transfer of misfolded proteins from the ER to the cytosol, where they are destroyed by the proteasome in a ubiquitin-dependent manner. Probably acts by serving as a linker between DERL1, which mediates the retrotranslocation of misfolded proteins into the cytosol, and the ATPase complex VCP, which mediates the translocation and ubiquitination (By similarity).</text>
</comment>
<comment type="subunit">
    <text evidence="1 2 3">Interacts with DERL1 and (via VIM motif) with VCP, suggesting that it forms a membrane complex with DERL1 that serves as a receptor for VCP. Also interacts with DERL2, DERL3 and SELENOK. The SELENOK-SELENOS complex interacts with VCP (By similarity). Interacts with CCDC47 (By similarity).</text>
</comment>
<comment type="subcellular location">
    <subcellularLocation>
        <location evidence="1">Endoplasmic reticulum membrane</location>
        <topology evidence="1">Single-pass membrane protein</topology>
    </subcellularLocation>
    <subcellularLocation>
        <location evidence="1">Cytoplasm</location>
    </subcellularLocation>
</comment>
<comment type="PTM">
    <text evidence="3">Truncated SELENOS proteins produced by failed UGA/Sec decoding are ubiquitinated by the CRL2(KLHDC2) and CRL2(KLHDC3) complexes, which recognizes the glycine (Gly) at the C-terminus of truncated SELENOS proteins. Truncated SELENOS proteins produced by failed UGA/Sec decoding are also ubiquitinated by the CRL5(KLHDC1) complex.</text>
</comment>
<comment type="similarity">
    <text evidence="6">Belongs to the selenoprotein S family.</text>
</comment>
<comment type="sequence caution" evidence="6">
    <conflict type="erroneous termination">
        <sequence resource="EMBL-CDS" id="AAH59111"/>
    </conflict>
    <text>Truncated C-terminus.</text>
</comment>
<comment type="sequence caution" evidence="6">
    <conflict type="erroneous termination">
        <sequence resource="EMBL-CDS" id="AAL59556"/>
    </conflict>
    <text>Truncated C-terminus.</text>
</comment>
<sequence>MDRGEEPMSARPALETESLRFLHVTVGSLLASYGWYILFSCVLLYIVIQKLSLRLRALRQRQLDQAEAVLEPDVVVKRQEALAAARLRMQEDLNAQVEKHKEKQRQLEEEKRRQKIEMWDSMQEGRSYKRNSGRPQEEDGPGPSTSSVIPKGKSDKKPLRGGGYNPLTGEGGGTCSWRPGRRGPSSGGUS</sequence>